<evidence type="ECO:0000250" key="1"/>
<evidence type="ECO:0000255" key="2">
    <source>
        <dbReference type="PROSITE-ProRule" id="PRU00609"/>
    </source>
</evidence>
<sequence length="294" mass="33182">MVLNHSHIVRLYLIKVMCQLLGMNCNTPTDIVFSFEGFRRRAGLTDCHSDGFGIAFFEGRGVRIFRDNQAASLSPIADCIKQYNIKSLNVIAHIRKATQGEVNIENTHPFIREIWGQNWVFAHNGNLKNLPDMTDHFLQPIGSTDSEAAFCYMAEYLKNTFRKKPSEMEIFEAIQKVTKGLAQHGTFNFILSNGEWMIAHCSTNLHYVMRKAPFGKAHRIDDDGVIDFSYYAKAGDKVNIITTFPLTKNESWTKMENGGFVFFKNGEKIAEVIGTPKEAIDDGTLGNRTINSAI</sequence>
<accession>P44098</accession>
<protein>
    <recommendedName>
        <fullName>Putative glutamine amidotransferase HI_1037</fullName>
        <ecNumber>2.4.2.-</ecNumber>
    </recommendedName>
</protein>
<dbReference type="EC" id="2.4.2.-"/>
<dbReference type="EMBL" id="L42023">
    <property type="protein sequence ID" value="AAC22697.1"/>
    <property type="molecule type" value="Genomic_DNA"/>
</dbReference>
<dbReference type="PIR" id="H64018">
    <property type="entry name" value="H64018"/>
</dbReference>
<dbReference type="RefSeq" id="NP_439197.1">
    <property type="nucleotide sequence ID" value="NC_000907.1"/>
</dbReference>
<dbReference type="SMR" id="P44098"/>
<dbReference type="STRING" id="71421.HI_1037"/>
<dbReference type="EnsemblBacteria" id="AAC22697">
    <property type="protein sequence ID" value="AAC22697"/>
    <property type="gene ID" value="HI_1037"/>
</dbReference>
<dbReference type="KEGG" id="hin:HI_1037"/>
<dbReference type="PATRIC" id="fig|71421.8.peg.1081"/>
<dbReference type="eggNOG" id="COG0121">
    <property type="taxonomic scope" value="Bacteria"/>
</dbReference>
<dbReference type="HOGENOM" id="CLU_059273_0_0_6"/>
<dbReference type="OrthoDB" id="321954at2"/>
<dbReference type="PhylomeDB" id="P44098"/>
<dbReference type="BioCyc" id="HINF71421:G1GJ1-1077-MONOMER"/>
<dbReference type="Proteomes" id="UP000000579">
    <property type="component" value="Chromosome"/>
</dbReference>
<dbReference type="GO" id="GO:0016740">
    <property type="term" value="F:transferase activity"/>
    <property type="evidence" value="ECO:0007669"/>
    <property type="project" value="UniProtKB-KW"/>
</dbReference>
<dbReference type="CDD" id="cd01908">
    <property type="entry name" value="YafJ"/>
    <property type="match status" value="1"/>
</dbReference>
<dbReference type="Gene3D" id="3.60.20.10">
    <property type="entry name" value="Glutamine Phosphoribosylpyrophosphate, subunit 1, domain 1"/>
    <property type="match status" value="1"/>
</dbReference>
<dbReference type="InterPro" id="IPR026869">
    <property type="entry name" value="EgtC-like"/>
</dbReference>
<dbReference type="InterPro" id="IPR017932">
    <property type="entry name" value="GATase_2_dom"/>
</dbReference>
<dbReference type="InterPro" id="IPR029055">
    <property type="entry name" value="Ntn_hydrolases_N"/>
</dbReference>
<dbReference type="PANTHER" id="PTHR42824">
    <property type="entry name" value="GLUTAMINE AMIDOTRANSFERASE"/>
    <property type="match status" value="1"/>
</dbReference>
<dbReference type="PANTHER" id="PTHR42824:SF1">
    <property type="entry name" value="GLUTAMINE AMIDOTRANSFERASE YAFJ-RELATED"/>
    <property type="match status" value="1"/>
</dbReference>
<dbReference type="Pfam" id="PF13230">
    <property type="entry name" value="GATase_4"/>
    <property type="match status" value="1"/>
</dbReference>
<dbReference type="SUPFAM" id="SSF56235">
    <property type="entry name" value="N-terminal nucleophile aminohydrolases (Ntn hydrolases)"/>
    <property type="match status" value="1"/>
</dbReference>
<dbReference type="PROSITE" id="PS51278">
    <property type="entry name" value="GATASE_TYPE_2"/>
    <property type="match status" value="1"/>
</dbReference>
<proteinExistence type="predicted"/>
<organism>
    <name type="scientific">Haemophilus influenzae (strain ATCC 51907 / DSM 11121 / KW20 / Rd)</name>
    <dbReference type="NCBI Taxonomy" id="71421"/>
    <lineage>
        <taxon>Bacteria</taxon>
        <taxon>Pseudomonadati</taxon>
        <taxon>Pseudomonadota</taxon>
        <taxon>Gammaproteobacteria</taxon>
        <taxon>Pasteurellales</taxon>
        <taxon>Pasteurellaceae</taxon>
        <taxon>Haemophilus</taxon>
    </lineage>
</organism>
<feature type="chain" id="PRO_0000168535" description="Putative glutamine amidotransferase HI_1037">
    <location>
        <begin position="1"/>
        <end position="294"/>
    </location>
</feature>
<feature type="domain" description="Glutamine amidotransferase type-2" evidence="2">
    <location>
        <begin position="18"/>
        <end position="266"/>
    </location>
</feature>
<feature type="active site" evidence="1">
    <location>
        <position position="18"/>
    </location>
</feature>
<gene>
    <name type="ordered locus">HI_1037</name>
</gene>
<reference key="1">
    <citation type="journal article" date="1995" name="Science">
        <title>Whole-genome random sequencing and assembly of Haemophilus influenzae Rd.</title>
        <authorList>
            <person name="Fleischmann R.D."/>
            <person name="Adams M.D."/>
            <person name="White O."/>
            <person name="Clayton R.A."/>
            <person name="Kirkness E.F."/>
            <person name="Kerlavage A.R."/>
            <person name="Bult C.J."/>
            <person name="Tomb J.-F."/>
            <person name="Dougherty B.A."/>
            <person name="Merrick J.M."/>
            <person name="McKenney K."/>
            <person name="Sutton G.G."/>
            <person name="FitzHugh W."/>
            <person name="Fields C.A."/>
            <person name="Gocayne J.D."/>
            <person name="Scott J.D."/>
            <person name="Shirley R."/>
            <person name="Liu L.-I."/>
            <person name="Glodek A."/>
            <person name="Kelley J.M."/>
            <person name="Weidman J.F."/>
            <person name="Phillips C.A."/>
            <person name="Spriggs T."/>
            <person name="Hedblom E."/>
            <person name="Cotton M.D."/>
            <person name="Utterback T.R."/>
            <person name="Hanna M.C."/>
            <person name="Nguyen D.T."/>
            <person name="Saudek D.M."/>
            <person name="Brandon R.C."/>
            <person name="Fine L.D."/>
            <person name="Fritchman J.L."/>
            <person name="Fuhrmann J.L."/>
            <person name="Geoghagen N.S.M."/>
            <person name="Gnehm C.L."/>
            <person name="McDonald L.A."/>
            <person name="Small K.V."/>
            <person name="Fraser C.M."/>
            <person name="Smith H.O."/>
            <person name="Venter J.C."/>
        </authorList>
    </citation>
    <scope>NUCLEOTIDE SEQUENCE [LARGE SCALE GENOMIC DNA]</scope>
    <source>
        <strain>ATCC 51907 / DSM 11121 / KW20 / Rd</strain>
    </source>
</reference>
<keyword id="KW-0315">Glutamine amidotransferase</keyword>
<keyword id="KW-1185">Reference proteome</keyword>
<keyword id="KW-0808">Transferase</keyword>
<name>Y1037_HAEIN</name>